<feature type="chain" id="PRO_0000198174" description="Ribosomal RNA large subunit methyltransferase H">
    <location>
        <begin position="1"/>
        <end position="156"/>
    </location>
</feature>
<feature type="binding site" evidence="1">
    <location>
        <position position="73"/>
    </location>
    <ligand>
        <name>S-adenosyl-L-methionine</name>
        <dbReference type="ChEBI" id="CHEBI:59789"/>
    </ligand>
</feature>
<feature type="binding site" evidence="1">
    <location>
        <position position="104"/>
    </location>
    <ligand>
        <name>S-adenosyl-L-methionine</name>
        <dbReference type="ChEBI" id="CHEBI:59789"/>
    </ligand>
</feature>
<feature type="binding site" evidence="1">
    <location>
        <begin position="123"/>
        <end position="128"/>
    </location>
    <ligand>
        <name>S-adenosyl-L-methionine</name>
        <dbReference type="ChEBI" id="CHEBI:59789"/>
    </ligand>
</feature>
<evidence type="ECO:0000255" key="1">
    <source>
        <dbReference type="HAMAP-Rule" id="MF_00658"/>
    </source>
</evidence>
<proteinExistence type="inferred from homology"/>
<sequence length="156" mass="17514">MKLQLIAVGTRMPDWVTRGFEEYQRRFPRDMALELIEIPAGKRGKNADIVRILQKEGEQMLAAIPKGNHIVTLDLPGKNWTTPELASAMNKWQLDGRDVSLLVGGPEGLAPACKEAAHQSWCLSALTLPHPLVRIVVAESLYRAWSVNTNHPYHRE</sequence>
<keyword id="KW-0963">Cytoplasm</keyword>
<keyword id="KW-0489">Methyltransferase</keyword>
<keyword id="KW-1185">Reference proteome</keyword>
<keyword id="KW-0698">rRNA processing</keyword>
<keyword id="KW-0949">S-adenosyl-L-methionine</keyword>
<keyword id="KW-0808">Transferase</keyword>
<comment type="function">
    <text evidence="1">Specifically methylates the pseudouridine at position 1915 (m3Psi1915) in 23S rRNA.</text>
</comment>
<comment type="catalytic activity">
    <reaction evidence="1">
        <text>pseudouridine(1915) in 23S rRNA + S-adenosyl-L-methionine = N(3)-methylpseudouridine(1915) in 23S rRNA + S-adenosyl-L-homocysteine + H(+)</text>
        <dbReference type="Rhea" id="RHEA:42752"/>
        <dbReference type="Rhea" id="RHEA-COMP:10221"/>
        <dbReference type="Rhea" id="RHEA-COMP:10222"/>
        <dbReference type="ChEBI" id="CHEBI:15378"/>
        <dbReference type="ChEBI" id="CHEBI:57856"/>
        <dbReference type="ChEBI" id="CHEBI:59789"/>
        <dbReference type="ChEBI" id="CHEBI:65314"/>
        <dbReference type="ChEBI" id="CHEBI:74486"/>
        <dbReference type="EC" id="2.1.1.177"/>
    </reaction>
</comment>
<comment type="subunit">
    <text evidence="1">Homodimer.</text>
</comment>
<comment type="subcellular location">
    <subcellularLocation>
        <location evidence="1">Cytoplasm</location>
    </subcellularLocation>
</comment>
<comment type="similarity">
    <text evidence="1">Belongs to the RNA methyltransferase RlmH family.</text>
</comment>
<gene>
    <name evidence="1" type="primary">rlmH</name>
    <name type="ordered locus">SO_1169</name>
</gene>
<protein>
    <recommendedName>
        <fullName evidence="1">Ribosomal RNA large subunit methyltransferase H</fullName>
        <ecNumber evidence="1">2.1.1.177</ecNumber>
    </recommendedName>
    <alternativeName>
        <fullName evidence="1">23S rRNA (pseudouridine1915-N3)-methyltransferase</fullName>
    </alternativeName>
    <alternativeName>
        <fullName evidence="1">23S rRNA m3Psi1915 methyltransferase</fullName>
    </alternativeName>
    <alternativeName>
        <fullName evidence="1">rRNA (pseudouridine-N3-)-methyltransferase RlmH</fullName>
    </alternativeName>
</protein>
<accession>Q8EHP8</accession>
<name>RLMH_SHEON</name>
<organism>
    <name type="scientific">Shewanella oneidensis (strain ATCC 700550 / JCM 31522 / CIP 106686 / LMG 19005 / NCIMB 14063 / MR-1)</name>
    <dbReference type="NCBI Taxonomy" id="211586"/>
    <lineage>
        <taxon>Bacteria</taxon>
        <taxon>Pseudomonadati</taxon>
        <taxon>Pseudomonadota</taxon>
        <taxon>Gammaproteobacteria</taxon>
        <taxon>Alteromonadales</taxon>
        <taxon>Shewanellaceae</taxon>
        <taxon>Shewanella</taxon>
    </lineage>
</organism>
<dbReference type="EC" id="2.1.1.177" evidence="1"/>
<dbReference type="EMBL" id="AE014299">
    <property type="protein sequence ID" value="AAN54239.1"/>
    <property type="molecule type" value="Genomic_DNA"/>
</dbReference>
<dbReference type="RefSeq" id="NP_716794.1">
    <property type="nucleotide sequence ID" value="NC_004347.2"/>
</dbReference>
<dbReference type="RefSeq" id="WP_011071400.1">
    <property type="nucleotide sequence ID" value="NC_004347.2"/>
</dbReference>
<dbReference type="SMR" id="Q8EHP8"/>
<dbReference type="STRING" id="211586.SO_1169"/>
<dbReference type="PaxDb" id="211586-SO_1169"/>
<dbReference type="KEGG" id="son:SO_1169"/>
<dbReference type="PATRIC" id="fig|211586.12.peg.1121"/>
<dbReference type="eggNOG" id="COG1576">
    <property type="taxonomic scope" value="Bacteria"/>
</dbReference>
<dbReference type="HOGENOM" id="CLU_100552_1_0_6"/>
<dbReference type="OrthoDB" id="9806643at2"/>
<dbReference type="PhylomeDB" id="Q8EHP8"/>
<dbReference type="BioCyc" id="SONE211586:G1GMP-1073-MONOMER"/>
<dbReference type="Proteomes" id="UP000008186">
    <property type="component" value="Chromosome"/>
</dbReference>
<dbReference type="GO" id="GO:0005737">
    <property type="term" value="C:cytoplasm"/>
    <property type="evidence" value="ECO:0007669"/>
    <property type="project" value="UniProtKB-SubCell"/>
</dbReference>
<dbReference type="GO" id="GO:0070038">
    <property type="term" value="F:rRNA (pseudouridine-N3-)-methyltransferase activity"/>
    <property type="evidence" value="ECO:0007669"/>
    <property type="project" value="UniProtKB-UniRule"/>
</dbReference>
<dbReference type="CDD" id="cd18081">
    <property type="entry name" value="RlmH-like"/>
    <property type="match status" value="1"/>
</dbReference>
<dbReference type="Gene3D" id="3.40.1280.10">
    <property type="match status" value="1"/>
</dbReference>
<dbReference type="HAMAP" id="MF_00658">
    <property type="entry name" value="23SrRNA_methyltr_H"/>
    <property type="match status" value="1"/>
</dbReference>
<dbReference type="InterPro" id="IPR029028">
    <property type="entry name" value="Alpha/beta_knot_MTases"/>
</dbReference>
<dbReference type="InterPro" id="IPR003742">
    <property type="entry name" value="RlmH-like"/>
</dbReference>
<dbReference type="InterPro" id="IPR029026">
    <property type="entry name" value="tRNA_m1G_MTases_N"/>
</dbReference>
<dbReference type="NCBIfam" id="NF000984">
    <property type="entry name" value="PRK00103.1-1"/>
    <property type="match status" value="1"/>
</dbReference>
<dbReference type="NCBIfam" id="NF000986">
    <property type="entry name" value="PRK00103.1-4"/>
    <property type="match status" value="1"/>
</dbReference>
<dbReference type="NCBIfam" id="TIGR00246">
    <property type="entry name" value="tRNA_RlmH_YbeA"/>
    <property type="match status" value="1"/>
</dbReference>
<dbReference type="PANTHER" id="PTHR33603">
    <property type="entry name" value="METHYLTRANSFERASE"/>
    <property type="match status" value="1"/>
</dbReference>
<dbReference type="PANTHER" id="PTHR33603:SF1">
    <property type="entry name" value="RIBOSOMAL RNA LARGE SUBUNIT METHYLTRANSFERASE H"/>
    <property type="match status" value="1"/>
</dbReference>
<dbReference type="Pfam" id="PF02590">
    <property type="entry name" value="SPOUT_MTase"/>
    <property type="match status" value="1"/>
</dbReference>
<dbReference type="PIRSF" id="PIRSF004505">
    <property type="entry name" value="MT_bac"/>
    <property type="match status" value="1"/>
</dbReference>
<dbReference type="SUPFAM" id="SSF75217">
    <property type="entry name" value="alpha/beta knot"/>
    <property type="match status" value="1"/>
</dbReference>
<reference key="1">
    <citation type="journal article" date="2002" name="Nat. Biotechnol.">
        <title>Genome sequence of the dissimilatory metal ion-reducing bacterium Shewanella oneidensis.</title>
        <authorList>
            <person name="Heidelberg J.F."/>
            <person name="Paulsen I.T."/>
            <person name="Nelson K.E."/>
            <person name="Gaidos E.J."/>
            <person name="Nelson W.C."/>
            <person name="Read T.D."/>
            <person name="Eisen J.A."/>
            <person name="Seshadri R."/>
            <person name="Ward N.L."/>
            <person name="Methe B.A."/>
            <person name="Clayton R.A."/>
            <person name="Meyer T."/>
            <person name="Tsapin A."/>
            <person name="Scott J."/>
            <person name="Beanan M.J."/>
            <person name="Brinkac L.M."/>
            <person name="Daugherty S.C."/>
            <person name="DeBoy R.T."/>
            <person name="Dodson R.J."/>
            <person name="Durkin A.S."/>
            <person name="Haft D.H."/>
            <person name="Kolonay J.F."/>
            <person name="Madupu R."/>
            <person name="Peterson J.D."/>
            <person name="Umayam L.A."/>
            <person name="White O."/>
            <person name="Wolf A.M."/>
            <person name="Vamathevan J.J."/>
            <person name="Weidman J.F."/>
            <person name="Impraim M."/>
            <person name="Lee K."/>
            <person name="Berry K.J."/>
            <person name="Lee C."/>
            <person name="Mueller J."/>
            <person name="Khouri H.M."/>
            <person name="Gill J."/>
            <person name="Utterback T.R."/>
            <person name="McDonald L.A."/>
            <person name="Feldblyum T.V."/>
            <person name="Smith H.O."/>
            <person name="Venter J.C."/>
            <person name="Nealson K.H."/>
            <person name="Fraser C.M."/>
        </authorList>
    </citation>
    <scope>NUCLEOTIDE SEQUENCE [LARGE SCALE GENOMIC DNA]</scope>
    <source>
        <strain>ATCC 700550 / JCM 31522 / CIP 106686 / LMG 19005 / NCIMB 14063 / MR-1</strain>
    </source>
</reference>